<proteinExistence type="predicted"/>
<reference key="1">
    <citation type="journal article" date="1995" name="DNA Seq.">
        <title>Nucleotide sequence of the region between crr and cysM in Salmonella typhimurium: five novel ORFs including one encoding a putative transcriptional regulator of the phosphotransferase system.</title>
        <authorList>
            <person name="Titgemeyer F.M."/>
            <person name="Reizer J."/>
            <person name="Reizer A."/>
            <person name="Tang J."/>
            <person name="Parr T.R. Jr."/>
            <person name="Saier M.H. Jr."/>
        </authorList>
    </citation>
    <scope>NUCLEOTIDE SEQUENCE [GENOMIC DNA]</scope>
    <source>
        <strain>LT2</strain>
    </source>
</reference>
<reference key="2">
    <citation type="journal article" date="2001" name="Nature">
        <title>Complete genome sequence of Salmonella enterica serovar Typhimurium LT2.</title>
        <authorList>
            <person name="McClelland M."/>
            <person name="Sanderson K.E."/>
            <person name="Spieth J."/>
            <person name="Clifton S.W."/>
            <person name="Latreille P."/>
            <person name="Courtney L."/>
            <person name="Porwollik S."/>
            <person name="Ali J."/>
            <person name="Dante M."/>
            <person name="Du F."/>
            <person name="Hou S."/>
            <person name="Layman D."/>
            <person name="Leonard S."/>
            <person name="Nguyen C."/>
            <person name="Scott K."/>
            <person name="Holmes A."/>
            <person name="Grewal N."/>
            <person name="Mulvaney E."/>
            <person name="Ryan E."/>
            <person name="Sun H."/>
            <person name="Florea L."/>
            <person name="Miller W."/>
            <person name="Stoneking T."/>
            <person name="Nhan M."/>
            <person name="Waterston R."/>
            <person name="Wilson R.K."/>
        </authorList>
    </citation>
    <scope>NUCLEOTIDE SEQUENCE [LARGE SCALE GENOMIC DNA]</scope>
    <source>
        <strain>LT2 / SGSC1412 / ATCC 700720</strain>
    </source>
</reference>
<dbReference type="EMBL" id="U11243">
    <property type="protein sequence ID" value="AAC43347.1"/>
    <property type="molecule type" value="Genomic_DNA"/>
</dbReference>
<dbReference type="EMBL" id="AE006468">
    <property type="protein sequence ID" value="AAL21333.1"/>
    <property type="molecule type" value="Genomic_DNA"/>
</dbReference>
<dbReference type="RefSeq" id="NP_461374.1">
    <property type="nucleotide sequence ID" value="NC_003197.2"/>
</dbReference>
<dbReference type="RefSeq" id="WP_001119682.1">
    <property type="nucleotide sequence ID" value="NC_003197.2"/>
</dbReference>
<dbReference type="SMR" id="P40196"/>
<dbReference type="STRING" id="99287.STM2439"/>
<dbReference type="PaxDb" id="99287-STM2439"/>
<dbReference type="GeneID" id="1253961"/>
<dbReference type="KEGG" id="stm:STM2439"/>
<dbReference type="PATRIC" id="fig|99287.12.peg.2577"/>
<dbReference type="HOGENOM" id="CLU_128765_0_0_6"/>
<dbReference type="OMA" id="FRTAIWV"/>
<dbReference type="BioCyc" id="SENT99287:STM2439-MONOMER"/>
<dbReference type="Proteomes" id="UP000001014">
    <property type="component" value="Chromosome"/>
</dbReference>
<dbReference type="FunFam" id="1.10.3810.10:FF:000018">
    <property type="entry name" value="Putative membrane carboxypeptidase"/>
    <property type="match status" value="1"/>
</dbReference>
<dbReference type="Gene3D" id="1.10.3810.10">
    <property type="entry name" value="Biosynthetic peptidoglycan transglycosylase-like"/>
    <property type="match status" value="1"/>
</dbReference>
<dbReference type="InterPro" id="IPR001264">
    <property type="entry name" value="Glyco_trans_51"/>
</dbReference>
<dbReference type="InterPro" id="IPR023346">
    <property type="entry name" value="Lysozyme-like_dom_sf"/>
</dbReference>
<dbReference type="InterPro" id="IPR036950">
    <property type="entry name" value="PBP_transglycosylase"/>
</dbReference>
<dbReference type="Pfam" id="PF00912">
    <property type="entry name" value="Transgly"/>
    <property type="match status" value="1"/>
</dbReference>
<dbReference type="SUPFAM" id="SSF53955">
    <property type="entry name" value="Lysozyme-like"/>
    <property type="match status" value="1"/>
</dbReference>
<organism>
    <name type="scientific">Salmonella typhimurium (strain LT2 / SGSC1412 / ATCC 700720)</name>
    <dbReference type="NCBI Taxonomy" id="99287"/>
    <lineage>
        <taxon>Bacteria</taxon>
        <taxon>Pseudomonadati</taxon>
        <taxon>Pseudomonadota</taxon>
        <taxon>Gammaproteobacteria</taxon>
        <taxon>Enterobacterales</taxon>
        <taxon>Enterobacteriaceae</taxon>
        <taxon>Salmonella</taxon>
    </lineage>
</organism>
<sequence>MPGVLLWFFKGVIALLLAFAVGLIVYYYLEIRPIAQTALQSASFWLSESPQTRFLRRAAAKIHPKSYTARLLYTQAGVDGHFRIAIWVFWLDSLYRDDELYAMMLAQAYYGRDSQGNAVYGTKNAALTLFHVPVTEMACQQQVQLIYMFKAPSLYRPGSARLVESSKHYMTLCQEQIQQ</sequence>
<keyword id="KW-1185">Reference proteome</keyword>
<protein>
    <recommendedName>
        <fullName>Uncharacterized protein YfeL</fullName>
    </recommendedName>
</protein>
<name>YFEL_SALTY</name>
<gene>
    <name type="primary">yfeL</name>
    <name type="ordered locus">STM2439</name>
</gene>
<accession>P40196</accession>
<feature type="chain" id="PRO_0000169223" description="Uncharacterized protein YfeL">
    <location>
        <begin position="1"/>
        <end position="179"/>
    </location>
</feature>